<organism>
    <name type="scientific">Rhizobium meliloti (strain 1021)</name>
    <name type="common">Ensifer meliloti</name>
    <name type="synonym">Sinorhizobium meliloti</name>
    <dbReference type="NCBI Taxonomy" id="266834"/>
    <lineage>
        <taxon>Bacteria</taxon>
        <taxon>Pseudomonadati</taxon>
        <taxon>Pseudomonadota</taxon>
        <taxon>Alphaproteobacteria</taxon>
        <taxon>Hyphomicrobiales</taxon>
        <taxon>Rhizobiaceae</taxon>
        <taxon>Sinorhizobium/Ensifer group</taxon>
        <taxon>Sinorhizobium</taxon>
    </lineage>
</organism>
<proteinExistence type="inferred from homology"/>
<comment type="function">
    <text evidence="1">Part of an ABC transporter complex involved in carbohydrate import. Could be involved in ribose, galactose and/or methyl galactoside import. Responsible for energy coupling to the transport system.</text>
</comment>
<comment type="catalytic activity">
    <reaction evidence="1">
        <text>D-ribose(out) + ATP + H2O = D-ribose(in) + ADP + phosphate + H(+)</text>
        <dbReference type="Rhea" id="RHEA:29903"/>
        <dbReference type="ChEBI" id="CHEBI:15377"/>
        <dbReference type="ChEBI" id="CHEBI:15378"/>
        <dbReference type="ChEBI" id="CHEBI:30616"/>
        <dbReference type="ChEBI" id="CHEBI:43474"/>
        <dbReference type="ChEBI" id="CHEBI:47013"/>
        <dbReference type="ChEBI" id="CHEBI:456216"/>
        <dbReference type="EC" id="7.5.2.7"/>
    </reaction>
</comment>
<comment type="catalytic activity">
    <reaction evidence="1">
        <text>D-galactose(out) + ATP + H2O = D-galactose(in) + ADP + phosphate + H(+)</text>
        <dbReference type="Rhea" id="RHEA:60156"/>
        <dbReference type="ChEBI" id="CHEBI:4139"/>
        <dbReference type="ChEBI" id="CHEBI:15377"/>
        <dbReference type="ChEBI" id="CHEBI:15378"/>
        <dbReference type="ChEBI" id="CHEBI:30616"/>
        <dbReference type="ChEBI" id="CHEBI:43474"/>
        <dbReference type="ChEBI" id="CHEBI:456216"/>
        <dbReference type="EC" id="7.5.2.11"/>
    </reaction>
</comment>
<comment type="subcellular location">
    <subcellularLocation>
        <location evidence="1">Cell inner membrane</location>
        <topology evidence="1">Peripheral membrane protein</topology>
    </subcellularLocation>
</comment>
<comment type="similarity">
    <text evidence="1">Belongs to the ABC transporter superfamily. Carbohydrate importer 2 (CUT2) (TC 3.A.1.2) family.</text>
</comment>
<feature type="chain" id="PRO_0000262990" description="Putative ribose/galactose/methyl galactoside import ATP-binding protein 1">
    <location>
        <begin position="1"/>
        <end position="501"/>
    </location>
</feature>
<feature type="domain" description="ABC transporter 1" evidence="1">
    <location>
        <begin position="5"/>
        <end position="237"/>
    </location>
</feature>
<feature type="domain" description="ABC transporter 2" evidence="1">
    <location>
        <begin position="249"/>
        <end position="492"/>
    </location>
</feature>
<feature type="binding site" evidence="1">
    <location>
        <begin position="37"/>
        <end position="44"/>
    </location>
    <ligand>
        <name>ATP</name>
        <dbReference type="ChEBI" id="CHEBI:30616"/>
    </ligand>
</feature>
<name>RGMG1_RHIME</name>
<reference key="1">
    <citation type="journal article" date="2001" name="Proc. Natl. Acad. Sci. U.S.A.">
        <title>Analysis of the chromosome sequence of the legume symbiont Sinorhizobium meliloti strain 1021.</title>
        <authorList>
            <person name="Capela D."/>
            <person name="Barloy-Hubler F."/>
            <person name="Gouzy J."/>
            <person name="Bothe G."/>
            <person name="Ampe F."/>
            <person name="Batut J."/>
            <person name="Boistard P."/>
            <person name="Becker A."/>
            <person name="Boutry M."/>
            <person name="Cadieu E."/>
            <person name="Dreano S."/>
            <person name="Gloux S."/>
            <person name="Godrie T."/>
            <person name="Goffeau A."/>
            <person name="Kahn D."/>
            <person name="Kiss E."/>
            <person name="Lelaure V."/>
            <person name="Masuy D."/>
            <person name="Pohl T."/>
            <person name="Portetelle D."/>
            <person name="Puehler A."/>
            <person name="Purnelle B."/>
            <person name="Ramsperger U."/>
            <person name="Renard C."/>
            <person name="Thebault P."/>
            <person name="Vandenbol M."/>
            <person name="Weidner S."/>
            <person name="Galibert F."/>
        </authorList>
    </citation>
    <scope>NUCLEOTIDE SEQUENCE [LARGE SCALE GENOMIC DNA]</scope>
    <source>
        <strain>1021</strain>
    </source>
</reference>
<reference key="2">
    <citation type="journal article" date="2001" name="Science">
        <title>The composite genome of the legume symbiont Sinorhizobium meliloti.</title>
        <authorList>
            <person name="Galibert F."/>
            <person name="Finan T.M."/>
            <person name="Long S.R."/>
            <person name="Puehler A."/>
            <person name="Abola P."/>
            <person name="Ampe F."/>
            <person name="Barloy-Hubler F."/>
            <person name="Barnett M.J."/>
            <person name="Becker A."/>
            <person name="Boistard P."/>
            <person name="Bothe G."/>
            <person name="Boutry M."/>
            <person name="Bowser L."/>
            <person name="Buhrmester J."/>
            <person name="Cadieu E."/>
            <person name="Capela D."/>
            <person name="Chain P."/>
            <person name="Cowie A."/>
            <person name="Davis R.W."/>
            <person name="Dreano S."/>
            <person name="Federspiel N.A."/>
            <person name="Fisher R.F."/>
            <person name="Gloux S."/>
            <person name="Godrie T."/>
            <person name="Goffeau A."/>
            <person name="Golding B."/>
            <person name="Gouzy J."/>
            <person name="Gurjal M."/>
            <person name="Hernandez-Lucas I."/>
            <person name="Hong A."/>
            <person name="Huizar L."/>
            <person name="Hyman R.W."/>
            <person name="Jones T."/>
            <person name="Kahn D."/>
            <person name="Kahn M.L."/>
            <person name="Kalman S."/>
            <person name="Keating D.H."/>
            <person name="Kiss E."/>
            <person name="Komp C."/>
            <person name="Lelaure V."/>
            <person name="Masuy D."/>
            <person name="Palm C."/>
            <person name="Peck M.C."/>
            <person name="Pohl T.M."/>
            <person name="Portetelle D."/>
            <person name="Purnelle B."/>
            <person name="Ramsperger U."/>
            <person name="Surzycki R."/>
            <person name="Thebault P."/>
            <person name="Vandenbol M."/>
            <person name="Vorhoelter F.J."/>
            <person name="Weidner S."/>
            <person name="Wells D.H."/>
            <person name="Wong K."/>
            <person name="Yeh K.-C."/>
            <person name="Batut J."/>
        </authorList>
    </citation>
    <scope>NUCLEOTIDE SEQUENCE [LARGE SCALE GENOMIC DNA]</scope>
    <source>
        <strain>1021</strain>
    </source>
</reference>
<keyword id="KW-0067">ATP-binding</keyword>
<keyword id="KW-0997">Cell inner membrane</keyword>
<keyword id="KW-1003">Cell membrane</keyword>
<keyword id="KW-0472">Membrane</keyword>
<keyword id="KW-0547">Nucleotide-binding</keyword>
<keyword id="KW-1185">Reference proteome</keyword>
<keyword id="KW-0677">Repeat</keyword>
<keyword id="KW-0762">Sugar transport</keyword>
<keyword id="KW-1278">Translocase</keyword>
<keyword id="KW-0813">Transport</keyword>
<sequence length="501" mass="53666">MTVLVSLSGISKNFSGVQALKGVDFDLRAGEVHALVGENGAGKSTLMRVLAGEMKPTSGTVSIHGETMQHSGPRGAAGRGISVIHQELALAPDLTVAENIFLGRLPRIVNHRRLRKAASEILERLGFDIDPAIHAGRLTVAHQQVVEIAKALSNRARIIVFDEPTAVLANTDAERLLAIIRELRAGGTGAVYISHRLNEVFDLSDRITVMKDGSHVETLETSATDVDAVIARMVGRQMSALFPSKAGRVPGEVVVRVRNVSRGRKVRDVSFSVRAGEVVGLGGLVGSGRTEVARLVFGADKMDSGTVELNGKPLHLSSPREAVRARIGLVPEDRKQQGVILDAPIRINTTLAKIRSISRLGFLDAGKERQVAVALGAEMRLKASSVDAPVSSLSGGNQQKVALAKWFHADCDLLILDEPTRGVDVGAKGEIYNLINDLAKAGKAILVISSEHQELFGICDRVLVMAEGAIVGELTESKFTEQQLLTLAMTRSARERDETSQ</sequence>
<evidence type="ECO:0000255" key="1">
    <source>
        <dbReference type="HAMAP-Rule" id="MF_01717"/>
    </source>
</evidence>
<accession>Q92MP8</accession>
<protein>
    <recommendedName>
        <fullName evidence="1">Putative ribose/galactose/methyl galactoside import ATP-binding protein 1</fullName>
        <ecNumber evidence="1">7.5.2.11</ecNumber>
        <ecNumber evidence="1">7.5.2.7</ecNumber>
    </recommendedName>
</protein>
<dbReference type="EC" id="7.5.2.11" evidence="1"/>
<dbReference type="EC" id="7.5.2.7" evidence="1"/>
<dbReference type="EMBL" id="AL591688">
    <property type="protein sequence ID" value="CAC47144.1"/>
    <property type="molecule type" value="Genomic_DNA"/>
</dbReference>
<dbReference type="RefSeq" id="NP_386671.1">
    <property type="nucleotide sequence ID" value="NC_003047.1"/>
</dbReference>
<dbReference type="RefSeq" id="WP_010970036.1">
    <property type="nucleotide sequence ID" value="NC_003047.1"/>
</dbReference>
<dbReference type="SMR" id="Q92MP8"/>
<dbReference type="EnsemblBacteria" id="CAC47144">
    <property type="protein sequence ID" value="CAC47144"/>
    <property type="gene ID" value="SMc02337"/>
</dbReference>
<dbReference type="KEGG" id="sme:SMc02337"/>
<dbReference type="PATRIC" id="fig|266834.11.peg.4061"/>
<dbReference type="eggNOG" id="COG1129">
    <property type="taxonomic scope" value="Bacteria"/>
</dbReference>
<dbReference type="HOGENOM" id="CLU_000604_92_3_5"/>
<dbReference type="OrthoDB" id="9805029at2"/>
<dbReference type="Proteomes" id="UP000001976">
    <property type="component" value="Chromosome"/>
</dbReference>
<dbReference type="GO" id="GO:0005886">
    <property type="term" value="C:plasma membrane"/>
    <property type="evidence" value="ECO:0007669"/>
    <property type="project" value="UniProtKB-SubCell"/>
</dbReference>
<dbReference type="GO" id="GO:0015611">
    <property type="term" value="F:ABC-type D-ribose transporter activity"/>
    <property type="evidence" value="ECO:0007669"/>
    <property type="project" value="UniProtKB-EC"/>
</dbReference>
<dbReference type="GO" id="GO:0005524">
    <property type="term" value="F:ATP binding"/>
    <property type="evidence" value="ECO:0007669"/>
    <property type="project" value="UniProtKB-KW"/>
</dbReference>
<dbReference type="GO" id="GO:0016887">
    <property type="term" value="F:ATP hydrolysis activity"/>
    <property type="evidence" value="ECO:0007669"/>
    <property type="project" value="InterPro"/>
</dbReference>
<dbReference type="CDD" id="cd03216">
    <property type="entry name" value="ABC_Carb_Monos_I"/>
    <property type="match status" value="1"/>
</dbReference>
<dbReference type="CDD" id="cd03215">
    <property type="entry name" value="ABC_Carb_Monos_II"/>
    <property type="match status" value="1"/>
</dbReference>
<dbReference type="FunFam" id="3.40.50.300:FF:000127">
    <property type="entry name" value="Ribose import ATP-binding protein RbsA"/>
    <property type="match status" value="1"/>
</dbReference>
<dbReference type="Gene3D" id="3.40.50.300">
    <property type="entry name" value="P-loop containing nucleotide triphosphate hydrolases"/>
    <property type="match status" value="2"/>
</dbReference>
<dbReference type="InterPro" id="IPR003593">
    <property type="entry name" value="AAA+_ATPase"/>
</dbReference>
<dbReference type="InterPro" id="IPR050107">
    <property type="entry name" value="ABC_carbohydrate_import_ATPase"/>
</dbReference>
<dbReference type="InterPro" id="IPR003439">
    <property type="entry name" value="ABC_transporter-like_ATP-bd"/>
</dbReference>
<dbReference type="InterPro" id="IPR017871">
    <property type="entry name" value="ABC_transporter-like_CS"/>
</dbReference>
<dbReference type="InterPro" id="IPR027417">
    <property type="entry name" value="P-loop_NTPase"/>
</dbReference>
<dbReference type="PANTHER" id="PTHR43790">
    <property type="entry name" value="CARBOHYDRATE TRANSPORT ATP-BINDING PROTEIN MG119-RELATED"/>
    <property type="match status" value="1"/>
</dbReference>
<dbReference type="PANTHER" id="PTHR43790:SF3">
    <property type="entry name" value="D-ALLOSE IMPORT ATP-BINDING PROTEIN ALSA-RELATED"/>
    <property type="match status" value="1"/>
</dbReference>
<dbReference type="Pfam" id="PF00005">
    <property type="entry name" value="ABC_tran"/>
    <property type="match status" value="2"/>
</dbReference>
<dbReference type="SMART" id="SM00382">
    <property type="entry name" value="AAA"/>
    <property type="match status" value="2"/>
</dbReference>
<dbReference type="SUPFAM" id="SSF52540">
    <property type="entry name" value="P-loop containing nucleoside triphosphate hydrolases"/>
    <property type="match status" value="2"/>
</dbReference>
<dbReference type="PROSITE" id="PS00211">
    <property type="entry name" value="ABC_TRANSPORTER_1"/>
    <property type="match status" value="1"/>
</dbReference>
<dbReference type="PROSITE" id="PS50893">
    <property type="entry name" value="ABC_TRANSPORTER_2"/>
    <property type="match status" value="2"/>
</dbReference>
<dbReference type="PROSITE" id="PS51260">
    <property type="entry name" value="MGLA"/>
    <property type="match status" value="1"/>
</dbReference>
<dbReference type="PROSITE" id="PS51254">
    <property type="entry name" value="RBSA"/>
    <property type="match status" value="1"/>
</dbReference>
<gene>
    <name type="ordered locus">R02565</name>
    <name type="ORF">SMc02337</name>
</gene>